<keyword id="KW-0998">Cell outer membrane</keyword>
<keyword id="KW-0378">Hydrolase</keyword>
<keyword id="KW-0472">Membrane</keyword>
<keyword id="KW-0574">Periplasm</keyword>
<keyword id="KW-0645">Protease</keyword>
<keyword id="KW-0677">Repeat</keyword>
<keyword id="KW-0964">Secreted</keyword>
<keyword id="KW-0720">Serine protease</keyword>
<keyword id="KW-0732">Signal</keyword>
<keyword id="KW-0812">Transmembrane</keyword>
<keyword id="KW-1134">Transmembrane beta strand</keyword>
<keyword id="KW-0843">Virulence</keyword>
<keyword id="KW-0865">Zymogen</keyword>
<name>IGA2_HAEIF</name>
<feature type="signal peptide" evidence="2">
    <location>
        <begin position="1"/>
        <end position="25"/>
    </location>
</feature>
<feature type="chain" id="PRO_0000387600" description="Immunoglobulin A1 protease autotransporter">
    <location>
        <begin position="26"/>
        <end position="1702"/>
    </location>
</feature>
<feature type="chain" id="PRO_0000026962" description="Immunoglobulin A1 protease">
    <location>
        <begin position="26"/>
        <end position="1014"/>
    </location>
</feature>
<feature type="chain" id="PRO_0000026963" description="Immunoglobulin A1 protease translocator" evidence="2">
    <location>
        <begin position="1015"/>
        <end position="1702"/>
    </location>
</feature>
<feature type="domain" description="Peptidase S6" evidence="4">
    <location>
        <begin position="26"/>
        <end position="332"/>
    </location>
</feature>
<feature type="repeat" description="1">
    <location>
        <begin position="1109"/>
        <end position="1116"/>
    </location>
</feature>
<feature type="repeat" description="2">
    <location>
        <begin position="1117"/>
        <end position="1124"/>
    </location>
</feature>
<feature type="domain" description="Autotransporter" evidence="3">
    <location>
        <begin position="1450"/>
        <end position="1702"/>
    </location>
</feature>
<feature type="region of interest" description="Disordered" evidence="5">
    <location>
        <begin position="991"/>
        <end position="1411"/>
    </location>
</feature>
<feature type="region of interest" description="2 X 8 AA tandem repeats of A-K-V-E-K-E-E-K">
    <location>
        <begin position="1109"/>
        <end position="1124"/>
    </location>
</feature>
<feature type="compositionally biased region" description="Polar residues" evidence="5">
    <location>
        <begin position="997"/>
        <end position="1021"/>
    </location>
</feature>
<feature type="compositionally biased region" description="Low complexity" evidence="5">
    <location>
        <begin position="1037"/>
        <end position="1047"/>
    </location>
</feature>
<feature type="compositionally biased region" description="Basic and acidic residues" evidence="5">
    <location>
        <begin position="1049"/>
        <end position="1061"/>
    </location>
</feature>
<feature type="compositionally biased region" description="Polar residues" evidence="5">
    <location>
        <begin position="1082"/>
        <end position="1095"/>
    </location>
</feature>
<feature type="compositionally biased region" description="Basic and acidic residues" evidence="5">
    <location>
        <begin position="1104"/>
        <end position="1132"/>
    </location>
</feature>
<feature type="compositionally biased region" description="Basic and acidic residues" evidence="5">
    <location>
        <begin position="1150"/>
        <end position="1162"/>
    </location>
</feature>
<feature type="compositionally biased region" description="Polar residues" evidence="5">
    <location>
        <begin position="1163"/>
        <end position="1186"/>
    </location>
</feature>
<feature type="compositionally biased region" description="Polar residues" evidence="5">
    <location>
        <begin position="1207"/>
        <end position="1218"/>
    </location>
</feature>
<feature type="compositionally biased region" description="Basic and acidic residues" evidence="5">
    <location>
        <begin position="1219"/>
        <end position="1234"/>
    </location>
</feature>
<feature type="compositionally biased region" description="Polar residues" evidence="5">
    <location>
        <begin position="1235"/>
        <end position="1255"/>
    </location>
</feature>
<feature type="compositionally biased region" description="Polar residues" evidence="5">
    <location>
        <begin position="1263"/>
        <end position="1305"/>
    </location>
</feature>
<feature type="compositionally biased region" description="Polar residues" evidence="5">
    <location>
        <begin position="1316"/>
        <end position="1341"/>
    </location>
</feature>
<feature type="compositionally biased region" description="Low complexity" evidence="5">
    <location>
        <begin position="1360"/>
        <end position="1378"/>
    </location>
</feature>
<feature type="compositionally biased region" description="Basic residues" evidence="5">
    <location>
        <begin position="1382"/>
        <end position="1392"/>
    </location>
</feature>
<feature type="active site" evidence="6">
    <location>
        <position position="288"/>
    </location>
</feature>
<gene>
    <name type="primary">iga</name>
</gene>
<organism>
    <name type="scientific">Haemophilus influenzae</name>
    <dbReference type="NCBI Taxonomy" id="727"/>
    <lineage>
        <taxon>Bacteria</taxon>
        <taxon>Pseudomonadati</taxon>
        <taxon>Pseudomonadota</taxon>
        <taxon>Gammaproteobacteria</taxon>
        <taxon>Pasteurellales</taxon>
        <taxon>Pasteurellaceae</taxon>
        <taxon>Haemophilus</taxon>
    </lineage>
</organism>
<evidence type="ECO:0000250" key="1"/>
<evidence type="ECO:0000255" key="2"/>
<evidence type="ECO:0000255" key="3">
    <source>
        <dbReference type="PROSITE-ProRule" id="PRU00556"/>
    </source>
</evidence>
<evidence type="ECO:0000255" key="4">
    <source>
        <dbReference type="PROSITE-ProRule" id="PRU01028"/>
    </source>
</evidence>
<evidence type="ECO:0000256" key="5">
    <source>
        <dbReference type="SAM" id="MobiDB-lite"/>
    </source>
</evidence>
<evidence type="ECO:0000305" key="6"/>
<comment type="function">
    <text>Virulence factor; cleaves host immunoglobulin A producing intact Fc and Fab fragments.</text>
</comment>
<comment type="catalytic activity">
    <reaction>
        <text>Cleavage of immunoglobulin A molecules at certain Pro-|-Xaa bonds in the hinge region. No small molecule substrates are known.</text>
        <dbReference type="EC" id="3.4.21.72"/>
    </reaction>
</comment>
<comment type="subcellular location">
    <molecule>Immunoglobulin A1 protease autotransporter</molecule>
    <subcellularLocation>
        <location evidence="1">Periplasm</location>
    </subcellularLocation>
</comment>
<comment type="subcellular location">
    <molecule>Immunoglobulin A1 protease</molecule>
    <subcellularLocation>
        <location>Secreted</location>
    </subcellularLocation>
    <subcellularLocation>
        <location>Cell surface</location>
    </subcellularLocation>
</comment>
<comment type="subcellular location">
    <molecule>Immunoglobulin A1 protease translocator</molecule>
    <subcellularLocation>
        <location evidence="1">Cell outer membrane</location>
        <topology evidence="1">Multi-pass membrane protein</topology>
    </subcellularLocation>
    <text evidence="1">The cleaved C-terminal fragment (autotransporter domain) is localized in the outer membrane.</text>
</comment>
<comment type="domain">
    <text evidence="1">The signal peptide, cleaved at the inner membrane, guides the autotransporter protein to the periplasmic space. Then, insertion of the C-terminal translocator domain in the outer membrane forms a hydrophilic pore for the translocation of the passenger domain to the bacterial cell surface, with subsequent cleavage (By similarity).</text>
</comment>
<accession>P45384</accession>
<reference key="1">
    <citation type="journal article" date="1992" name="J. Bacteriol.">
        <title>A comparative genetic study of serologically distinct Haemophilus influenzae type 1 immunoglobulin A1 proteases.</title>
        <authorList>
            <person name="Poulsen K."/>
            <person name="Reinholdt J."/>
            <person name="Kilian M."/>
        </authorList>
    </citation>
    <scope>NUCLEOTIDE SEQUENCE [GENOMIC DNA]</scope>
    <source>
        <strain>HK715 / Serotype B</strain>
    </source>
</reference>
<sequence length="1702" mass="186539">MLNKKFKLNFIALTVAYALTPYTEAALVRDDVDYQIFRDFAENKGRFSVGATNVEVRDKNNHSLGNVLPNGIPMIDFSVVDVDKRIATLINPQYVVGVKHVSNGVSELHFGNLNGNMNNGNDKSHRDVSSEENRYFSVEKNEYPTKLNGKAVTTEDQTQKRREDYYMPRLDKFVTEVAPIEASTASSDAGTYNDQNKYPAFVRLGSGSQFIYKKGDNYSLILNNHEVGGNNLKLVGDAYTYGIAGTPYKVNHENNGLIGFGNSKEEHSDPKGILSQDPLTNYAVLGDSGSPLFVYDREKGKWLFLGSYDFWAGYNKKSWQEWNIYKPEFAKTVLDKDTAGSLTGSNTQYNWNPTGKTSVISNGSESLNVDLFDSSQDTDSKKNNHGKSVTLRGSGTLTLNNNIDQGAGGLFFEGDYEVKGTSDSTTWKGAGVSVADGKTVTWKVHNPKSDRLAKIGKGTLIVEGKGENKGSLKVGDGTVILKQQADANNKVKAFSQVGIVSGRSTVVLNDDKQVDPNSIYFGFRGGRLDANGNNLTFEHIRNIDDGARLVNHNTSKTSTVTITGESLITDPNTITPYNIDAPDEDNPYAFRRIKDGGQLYLNLENYTYYALRKGASTRSELPKNSGESNENWLYMGKTSDEAKRNVMNHINNERMNGFNGYFGEEEGKNNGNLNVTFKGKSEQNRFLLTGGTNLNGDLKVEKGTLFLSGRPTPHARDIAGISSTKKDQHFAENNEVVVEDDWINRNFKATNINVTNNATLYSGRNVANITSNITASDNAKVHIGYKAGDTVCVRSDYTGYVTCTTDKLSDKALNSFNATNVSGNVNLSGNANFVLGKANLFGTISGTGNSQVRLTENSHWHLTGDSNVNQLNLDKGHIHLNAQNDANKVTTYNTLTVNSLSGNGSFYYLTDLSNKQGDKVVVTKSATGNFTLQVADKTGEPTKNELTLFDASNATRNNLNVSLVGNTVDLGAWKYKLRNVNGRYDLYNPEVEKRNQTVDTTNITTPNNIQADVPSVPSNNEEIARVETPVPPPAPATPSETTETVAENSKQESKTVEKNEQDATETTAQNGEVAEEAKPSVKANTQTNEVAQSGSETEETQTTEIKETAKVEKEEKAKVEKEEKAKVEKDEIQEAPQMASETSPKQAKPAPKEVSTDTKVEETQVQAQPQTQSTTVAAAEATSPNSKPAEETQPSEKTNAEPVTPVVSKNQTENTTDQPTEREKTAKVETEKTQEPPQVASQASPKQEQSETVQPQAVLESENVPTVNNAEEVQAQLQTQTSATVSTKQPAPENSINTGSATAITETAEKSDKPQTETAASTEDASQHKANTVADNSVANNSESSEPKSRRRRSISQPQETSAEETTAASTDETTIADNSKRSKPNRRSRRSVRSEPTVTNGSDRSTVALRDLTSTNTNAVISDAMAKAQFVALNVGKAVSQHISQLEMNNEGQYNVWVSNTSMNENYSSSQYRRFSSKSTQTQLGWDQTISNNVQLGGVFTYVRNSNNFDKASSKNTLAQVNFYSKYYADNHWYLGIDLGYGKFQSNLKTNHNAKFARHTAQFGLTAGKAFNLGNFGITPIVGVRYSYLSNANFALAKDRIKVNPISVKTAFAQVDLSYTYHLGEFSVTPILSARYDTNQGSGKINVNQYDFAYNVENQQQYNAGLKLKYHNVKLSLIGGLTKAKQAEKQKTAELKLSFSF</sequence>
<dbReference type="EC" id="3.4.21.72"/>
<dbReference type="EMBL" id="M87489">
    <property type="protein sequence ID" value="AAA24966.1"/>
    <property type="molecule type" value="Genomic_DNA"/>
</dbReference>
<dbReference type="PIR" id="A41859">
    <property type="entry name" value="A41859"/>
</dbReference>
<dbReference type="SMR" id="P45384"/>
<dbReference type="MEROPS" id="S06.007"/>
<dbReference type="GO" id="GO:0009279">
    <property type="term" value="C:cell outer membrane"/>
    <property type="evidence" value="ECO:0007669"/>
    <property type="project" value="UniProtKB-SubCell"/>
</dbReference>
<dbReference type="GO" id="GO:0009986">
    <property type="term" value="C:cell surface"/>
    <property type="evidence" value="ECO:0007669"/>
    <property type="project" value="UniProtKB-SubCell"/>
</dbReference>
<dbReference type="GO" id="GO:0005576">
    <property type="term" value="C:extracellular region"/>
    <property type="evidence" value="ECO:0007669"/>
    <property type="project" value="UniProtKB-SubCell"/>
</dbReference>
<dbReference type="GO" id="GO:0042597">
    <property type="term" value="C:periplasmic space"/>
    <property type="evidence" value="ECO:0007669"/>
    <property type="project" value="UniProtKB-SubCell"/>
</dbReference>
<dbReference type="GO" id="GO:0004252">
    <property type="term" value="F:serine-type endopeptidase activity"/>
    <property type="evidence" value="ECO:0007669"/>
    <property type="project" value="InterPro"/>
</dbReference>
<dbReference type="GO" id="GO:0006508">
    <property type="term" value="P:proteolysis"/>
    <property type="evidence" value="ECO:0007669"/>
    <property type="project" value="UniProtKB-KW"/>
</dbReference>
<dbReference type="GO" id="GO:0141140">
    <property type="term" value="P:symbiont-mediated suppression of host immunoglobulin-mediated immune response"/>
    <property type="evidence" value="ECO:0000269"/>
    <property type="project" value="SigSci"/>
</dbReference>
<dbReference type="CDD" id="cd01343">
    <property type="entry name" value="PL1_Passenger_AT"/>
    <property type="match status" value="1"/>
</dbReference>
<dbReference type="Gene3D" id="2.160.20.20">
    <property type="match status" value="1"/>
</dbReference>
<dbReference type="Gene3D" id="2.40.10.120">
    <property type="match status" value="1"/>
</dbReference>
<dbReference type="Gene3D" id="3.30.160.280">
    <property type="match status" value="1"/>
</dbReference>
<dbReference type="Gene3D" id="4.10.1240.40">
    <property type="match status" value="1"/>
</dbReference>
<dbReference type="Gene3D" id="2.40.128.130">
    <property type="entry name" value="Autotransporter beta-domain"/>
    <property type="match status" value="1"/>
</dbReference>
<dbReference type="InterPro" id="IPR005546">
    <property type="entry name" value="Autotransporte_beta"/>
</dbReference>
<dbReference type="InterPro" id="IPR036709">
    <property type="entry name" value="Autotransporte_beta_dom_sf"/>
</dbReference>
<dbReference type="InterPro" id="IPR012332">
    <property type="entry name" value="Autotransporter_pectin_lyase_C"/>
</dbReference>
<dbReference type="InterPro" id="IPR050909">
    <property type="entry name" value="Bact_Autotransporter_VF"/>
</dbReference>
<dbReference type="InterPro" id="IPR011050">
    <property type="entry name" value="Pectin_lyase_fold/virulence"/>
</dbReference>
<dbReference type="InterPro" id="IPR000710">
    <property type="entry name" value="Peptidase_S6"/>
</dbReference>
<dbReference type="InterPro" id="IPR030396">
    <property type="entry name" value="Peptidase_S6_dom"/>
</dbReference>
<dbReference type="InterPro" id="IPR004899">
    <property type="entry name" value="Pertactin_central"/>
</dbReference>
<dbReference type="PANTHER" id="PTHR12338">
    <property type="entry name" value="AUTOTRANSPORTER"/>
    <property type="match status" value="1"/>
</dbReference>
<dbReference type="PANTHER" id="PTHR12338:SF9">
    <property type="entry name" value="IMMUNOGLOBULIN A1 PROTEASE AUTOTRANSPORTER"/>
    <property type="match status" value="1"/>
</dbReference>
<dbReference type="Pfam" id="PF03797">
    <property type="entry name" value="Autotransporter"/>
    <property type="match status" value="1"/>
</dbReference>
<dbReference type="Pfam" id="PF24078">
    <property type="entry name" value="Beta-sol_PIC_HAP1_IgA0_2nd"/>
    <property type="match status" value="1"/>
</dbReference>
<dbReference type="Pfam" id="PF24077">
    <property type="entry name" value="IgA0_D2"/>
    <property type="match status" value="1"/>
</dbReference>
<dbReference type="Pfam" id="PF02395">
    <property type="entry name" value="Peptidase_S6"/>
    <property type="match status" value="1"/>
</dbReference>
<dbReference type="Pfam" id="PF03212">
    <property type="entry name" value="Pertactin"/>
    <property type="match status" value="1"/>
</dbReference>
<dbReference type="PRINTS" id="PR00921">
    <property type="entry name" value="IGASERPTASE"/>
</dbReference>
<dbReference type="SMART" id="SM00869">
    <property type="entry name" value="Autotransporter"/>
    <property type="match status" value="1"/>
</dbReference>
<dbReference type="SUPFAM" id="SSF103515">
    <property type="entry name" value="Autotransporter"/>
    <property type="match status" value="1"/>
</dbReference>
<dbReference type="SUPFAM" id="SSF51126">
    <property type="entry name" value="Pectin lyase-like"/>
    <property type="match status" value="1"/>
</dbReference>
<dbReference type="PROSITE" id="PS51208">
    <property type="entry name" value="AUTOTRANSPORTER"/>
    <property type="match status" value="1"/>
</dbReference>
<dbReference type="PROSITE" id="PS51691">
    <property type="entry name" value="PEPTIDASE_S6"/>
    <property type="match status" value="1"/>
</dbReference>
<protein>
    <recommendedName>
        <fullName>Immunoglobulin A1 protease autotransporter</fullName>
        <ecNumber>3.4.21.72</ecNumber>
    </recommendedName>
    <component>
        <recommendedName>
            <fullName>Immunoglobulin A1 protease</fullName>
            <shortName>IGA1 protease</shortName>
        </recommendedName>
    </component>
    <component>
        <recommendedName>
            <fullName>Immunoglobulin A1 protease translocator</fullName>
        </recommendedName>
        <alternativeName>
            <fullName>Helper peptide</fullName>
        </alternativeName>
    </component>
</protein>
<proteinExistence type="inferred from homology"/>